<name>FDL18_ARATH</name>
<organism>
    <name type="scientific">Arabidopsis thaliana</name>
    <name type="common">Mouse-ear cress</name>
    <dbReference type="NCBI Taxonomy" id="3702"/>
    <lineage>
        <taxon>Eukaryota</taxon>
        <taxon>Viridiplantae</taxon>
        <taxon>Streptophyta</taxon>
        <taxon>Embryophyta</taxon>
        <taxon>Tracheophyta</taxon>
        <taxon>Spermatophyta</taxon>
        <taxon>Magnoliopsida</taxon>
        <taxon>eudicotyledons</taxon>
        <taxon>Gunneridae</taxon>
        <taxon>Pentapetalae</taxon>
        <taxon>rosids</taxon>
        <taxon>malvids</taxon>
        <taxon>Brassicales</taxon>
        <taxon>Brassicaceae</taxon>
        <taxon>Camelineae</taxon>
        <taxon>Arabidopsis</taxon>
    </lineage>
</organism>
<accession>Q9SMU0</accession>
<keyword id="KW-0025">Alternative splicing</keyword>
<keyword id="KW-0433">Leucine-rich repeat</keyword>
<keyword id="KW-1185">Reference proteome</keyword>
<keyword id="KW-0677">Repeat</keyword>
<gene>
    <name type="ordered locus">At3g49030</name>
    <name type="ORF">T2J13.130</name>
</gene>
<proteinExistence type="predicted"/>
<feature type="chain" id="PRO_0000283111" description="Putative F-box/FBD/LRR-repeat protein At3g49030">
    <location>
        <begin position="1"/>
        <end position="443"/>
    </location>
</feature>
<feature type="domain" description="F-box" evidence="1">
    <location>
        <begin position="20"/>
        <end position="68"/>
    </location>
</feature>
<feature type="repeat" description="LRR 1">
    <location>
        <begin position="74"/>
        <end position="100"/>
    </location>
</feature>
<feature type="repeat" description="LRR 2">
    <location>
        <begin position="152"/>
        <end position="179"/>
    </location>
</feature>
<feature type="repeat" description="LRR 3">
    <location>
        <begin position="180"/>
        <end position="205"/>
    </location>
</feature>
<feature type="repeat" description="LRR 4">
    <location>
        <begin position="218"/>
        <end position="252"/>
    </location>
</feature>
<feature type="repeat" description="LRR 5">
    <location>
        <begin position="272"/>
        <end position="297"/>
    </location>
</feature>
<feature type="repeat" description="LRR 6">
    <location>
        <begin position="320"/>
        <end position="345"/>
    </location>
</feature>
<feature type="domain" description="FBD">
    <location>
        <begin position="357"/>
        <end position="408"/>
    </location>
</feature>
<dbReference type="EMBL" id="AL132967">
    <property type="protein sequence ID" value="CAB62007.1"/>
    <property type="molecule type" value="Genomic_DNA"/>
</dbReference>
<dbReference type="EMBL" id="CP002686">
    <property type="protein sequence ID" value="AEE78488.1"/>
    <property type="molecule type" value="Genomic_DNA"/>
</dbReference>
<dbReference type="PIR" id="T46127">
    <property type="entry name" value="T46127"/>
</dbReference>
<dbReference type="RefSeq" id="NP_190472.1">
    <molecule id="Q9SMU0-1"/>
    <property type="nucleotide sequence ID" value="NM_114762.1"/>
</dbReference>
<dbReference type="FunCoup" id="Q9SMU0">
    <property type="interactions" value="2"/>
</dbReference>
<dbReference type="iPTMnet" id="Q9SMU0"/>
<dbReference type="PaxDb" id="3702-AT3G49030.1"/>
<dbReference type="ProteomicsDB" id="230769">
    <molecule id="Q9SMU0-1"/>
</dbReference>
<dbReference type="EnsemblPlants" id="AT3G49030.1">
    <molecule id="Q9SMU0-1"/>
    <property type="protein sequence ID" value="AT3G49030.1"/>
    <property type="gene ID" value="AT3G49030"/>
</dbReference>
<dbReference type="GeneID" id="824064"/>
<dbReference type="Gramene" id="AT3G49030.1">
    <molecule id="Q9SMU0-1"/>
    <property type="protein sequence ID" value="AT3G49030.1"/>
    <property type="gene ID" value="AT3G49030"/>
</dbReference>
<dbReference type="KEGG" id="ath:AT3G49030"/>
<dbReference type="Araport" id="AT3G49030"/>
<dbReference type="TAIR" id="AT3G49030"/>
<dbReference type="HOGENOM" id="CLU_010721_1_2_1"/>
<dbReference type="InParanoid" id="Q9SMU0"/>
<dbReference type="OMA" id="YRIEINT"/>
<dbReference type="PhylomeDB" id="Q9SMU0"/>
<dbReference type="PRO" id="PR:Q9SMU0"/>
<dbReference type="Proteomes" id="UP000006548">
    <property type="component" value="Chromosome 3"/>
</dbReference>
<dbReference type="CDD" id="cd22160">
    <property type="entry name" value="F-box_AtFBL13-like"/>
    <property type="match status" value="1"/>
</dbReference>
<dbReference type="Gene3D" id="1.20.1280.50">
    <property type="match status" value="1"/>
</dbReference>
<dbReference type="Gene3D" id="3.80.10.10">
    <property type="entry name" value="Ribonuclease Inhibitor"/>
    <property type="match status" value="1"/>
</dbReference>
<dbReference type="InterPro" id="IPR036047">
    <property type="entry name" value="F-box-like_dom_sf"/>
</dbReference>
<dbReference type="InterPro" id="IPR053781">
    <property type="entry name" value="F-box_AtFBL13-like"/>
</dbReference>
<dbReference type="InterPro" id="IPR001810">
    <property type="entry name" value="F-box_dom"/>
</dbReference>
<dbReference type="InterPro" id="IPR006566">
    <property type="entry name" value="FBD"/>
</dbReference>
<dbReference type="InterPro" id="IPR050232">
    <property type="entry name" value="FBL13/AtMIF1-like"/>
</dbReference>
<dbReference type="InterPro" id="IPR032675">
    <property type="entry name" value="LRR_dom_sf"/>
</dbReference>
<dbReference type="InterPro" id="IPR055411">
    <property type="entry name" value="LRR_FXL15/At3g58940/PEG3-like"/>
</dbReference>
<dbReference type="PANTHER" id="PTHR31900:SF34">
    <property type="entry name" value="EMB|CAB62440.1-RELATED"/>
    <property type="match status" value="1"/>
</dbReference>
<dbReference type="PANTHER" id="PTHR31900">
    <property type="entry name" value="F-BOX/RNI SUPERFAMILY PROTEIN-RELATED"/>
    <property type="match status" value="1"/>
</dbReference>
<dbReference type="Pfam" id="PF00646">
    <property type="entry name" value="F-box"/>
    <property type="match status" value="1"/>
</dbReference>
<dbReference type="Pfam" id="PF08387">
    <property type="entry name" value="FBD"/>
    <property type="match status" value="1"/>
</dbReference>
<dbReference type="Pfam" id="PF24758">
    <property type="entry name" value="LRR_At5g56370"/>
    <property type="match status" value="1"/>
</dbReference>
<dbReference type="SMART" id="SM00579">
    <property type="entry name" value="FBD"/>
    <property type="match status" value="1"/>
</dbReference>
<dbReference type="SMART" id="SM00256">
    <property type="entry name" value="FBOX"/>
    <property type="match status" value="1"/>
</dbReference>
<dbReference type="SUPFAM" id="SSF81383">
    <property type="entry name" value="F-box domain"/>
    <property type="match status" value="1"/>
</dbReference>
<dbReference type="SUPFAM" id="SSF52058">
    <property type="entry name" value="L domain-like"/>
    <property type="match status" value="1"/>
</dbReference>
<dbReference type="PROSITE" id="PS50181">
    <property type="entry name" value="FBOX"/>
    <property type="match status" value="1"/>
</dbReference>
<reference key="1">
    <citation type="journal article" date="2000" name="Nature">
        <title>Sequence and analysis of chromosome 3 of the plant Arabidopsis thaliana.</title>
        <authorList>
            <person name="Salanoubat M."/>
            <person name="Lemcke K."/>
            <person name="Rieger M."/>
            <person name="Ansorge W."/>
            <person name="Unseld M."/>
            <person name="Fartmann B."/>
            <person name="Valle G."/>
            <person name="Bloecker H."/>
            <person name="Perez-Alonso M."/>
            <person name="Obermaier B."/>
            <person name="Delseny M."/>
            <person name="Boutry M."/>
            <person name="Grivell L.A."/>
            <person name="Mache R."/>
            <person name="Puigdomenech P."/>
            <person name="De Simone V."/>
            <person name="Choisne N."/>
            <person name="Artiguenave F."/>
            <person name="Robert C."/>
            <person name="Brottier P."/>
            <person name="Wincker P."/>
            <person name="Cattolico L."/>
            <person name="Weissenbach J."/>
            <person name="Saurin W."/>
            <person name="Quetier F."/>
            <person name="Schaefer M."/>
            <person name="Mueller-Auer S."/>
            <person name="Gabel C."/>
            <person name="Fuchs M."/>
            <person name="Benes V."/>
            <person name="Wurmbach E."/>
            <person name="Drzonek H."/>
            <person name="Erfle H."/>
            <person name="Jordan N."/>
            <person name="Bangert S."/>
            <person name="Wiedelmann R."/>
            <person name="Kranz H."/>
            <person name="Voss H."/>
            <person name="Holland R."/>
            <person name="Brandt P."/>
            <person name="Nyakatura G."/>
            <person name="Vezzi A."/>
            <person name="D'Angelo M."/>
            <person name="Pallavicini A."/>
            <person name="Toppo S."/>
            <person name="Simionati B."/>
            <person name="Conrad A."/>
            <person name="Hornischer K."/>
            <person name="Kauer G."/>
            <person name="Loehnert T.-H."/>
            <person name="Nordsiek G."/>
            <person name="Reichelt J."/>
            <person name="Scharfe M."/>
            <person name="Schoen O."/>
            <person name="Bargues M."/>
            <person name="Terol J."/>
            <person name="Climent J."/>
            <person name="Navarro P."/>
            <person name="Collado C."/>
            <person name="Perez-Perez A."/>
            <person name="Ottenwaelder B."/>
            <person name="Duchemin D."/>
            <person name="Cooke R."/>
            <person name="Laudie M."/>
            <person name="Berger-Llauro C."/>
            <person name="Purnelle B."/>
            <person name="Masuy D."/>
            <person name="de Haan M."/>
            <person name="Maarse A.C."/>
            <person name="Alcaraz J.-P."/>
            <person name="Cottet A."/>
            <person name="Casacuberta E."/>
            <person name="Monfort A."/>
            <person name="Argiriou A."/>
            <person name="Flores M."/>
            <person name="Liguori R."/>
            <person name="Vitale D."/>
            <person name="Mannhaupt G."/>
            <person name="Haase D."/>
            <person name="Schoof H."/>
            <person name="Rudd S."/>
            <person name="Zaccaria P."/>
            <person name="Mewes H.-W."/>
            <person name="Mayer K.F.X."/>
            <person name="Kaul S."/>
            <person name="Town C.D."/>
            <person name="Koo H.L."/>
            <person name="Tallon L.J."/>
            <person name="Jenkins J."/>
            <person name="Rooney T."/>
            <person name="Rizzo M."/>
            <person name="Walts A."/>
            <person name="Utterback T."/>
            <person name="Fujii C.Y."/>
            <person name="Shea T.P."/>
            <person name="Creasy T.H."/>
            <person name="Haas B."/>
            <person name="Maiti R."/>
            <person name="Wu D."/>
            <person name="Peterson J."/>
            <person name="Van Aken S."/>
            <person name="Pai G."/>
            <person name="Militscher J."/>
            <person name="Sellers P."/>
            <person name="Gill J.E."/>
            <person name="Feldblyum T.V."/>
            <person name="Preuss D."/>
            <person name="Lin X."/>
            <person name="Nierman W.C."/>
            <person name="Salzberg S.L."/>
            <person name="White O."/>
            <person name="Venter J.C."/>
            <person name="Fraser C.M."/>
            <person name="Kaneko T."/>
            <person name="Nakamura Y."/>
            <person name="Sato S."/>
            <person name="Kato T."/>
            <person name="Asamizu E."/>
            <person name="Sasamoto S."/>
            <person name="Kimura T."/>
            <person name="Idesawa K."/>
            <person name="Kawashima K."/>
            <person name="Kishida Y."/>
            <person name="Kiyokawa C."/>
            <person name="Kohara M."/>
            <person name="Matsumoto M."/>
            <person name="Matsuno A."/>
            <person name="Muraki A."/>
            <person name="Nakayama S."/>
            <person name="Nakazaki N."/>
            <person name="Shinpo S."/>
            <person name="Takeuchi C."/>
            <person name="Wada T."/>
            <person name="Watanabe A."/>
            <person name="Yamada M."/>
            <person name="Yasuda M."/>
            <person name="Tabata S."/>
        </authorList>
    </citation>
    <scope>NUCLEOTIDE SEQUENCE [LARGE SCALE GENOMIC DNA]</scope>
    <source>
        <strain>cv. Columbia</strain>
    </source>
</reference>
<reference key="2">
    <citation type="journal article" date="2017" name="Plant J.">
        <title>Araport11: a complete reannotation of the Arabidopsis thaliana reference genome.</title>
        <authorList>
            <person name="Cheng C.Y."/>
            <person name="Krishnakumar V."/>
            <person name="Chan A.P."/>
            <person name="Thibaud-Nissen F."/>
            <person name="Schobel S."/>
            <person name="Town C.D."/>
        </authorList>
    </citation>
    <scope>GENOME REANNOTATION</scope>
    <source>
        <strain>cv. Columbia</strain>
    </source>
</reference>
<evidence type="ECO:0000255" key="1">
    <source>
        <dbReference type="PROSITE-ProRule" id="PRU00080"/>
    </source>
</evidence>
<protein>
    <recommendedName>
        <fullName>Putative F-box/FBD/LRR-repeat protein At3g49030</fullName>
    </recommendedName>
</protein>
<sequence length="443" mass="50820">MEQQLKTDGLNLSIRDAVKEDRISELPEDLLLQILSDIPTENVIATSVLSKRWRSLWKMVPNLTFDFTFDPKYHQTFSENLYRSLTSHEASVLESLQLNFTRGIDGLNIGMWIATAYVRHVRKLVLVSFGDVRDKRARFRSALFNFNDTLDILEIQDYILLDLPSPVCLKSLRELRLYEVHFKDEASVCNLLCGCPSLEVLSVHRERNVDVETFTIVVPSLQRLTIYDFCIGGGKGGYVINAPSLKYLNIVGFEGLDFCLIENAPELVEAEISDVSHIANENILESLTSVKRLSLESPIKIKFPTGKVFDQLVYLDVLTKEREWWNLLSRMLESSPKLQILKLTGLSCIEKGLDGQNWNPPKCVPECLLFHLEKFLWTGYEWQRGDEKEVATYILENARLLKKATFSTKRIDLENLEKRREMLNELASVARASDSCHLVFHSI</sequence>
<comment type="alternative products">
    <event type="alternative splicing"/>
    <isoform>
        <id>Q9SMU0-1</id>
        <name>1</name>
        <sequence type="displayed"/>
    </isoform>
    <text>A number of isoforms are produced. According to EST sequences.</text>
</comment>